<comment type="function">
    <text evidence="2">Factor Xa is a vitamin K-dependent glycoprotein that converts prothrombin to thrombin in the presence of factor Va, calcium and phospholipid during blood clotting. Factor Xa activates pro-inflammatory signaling pathways in a protease-activated receptor (PAR)-dependent manner (By similarity).</text>
</comment>
<comment type="catalytic activity">
    <reaction>
        <text>Selective cleavage of Arg-|-Thr and then Arg-|-Ile bonds in prothrombin to form thrombin.</text>
        <dbReference type="EC" id="3.4.21.6"/>
    </reaction>
</comment>
<comment type="activity regulation">
    <text evidence="1">Inhibited by SERPINA5.</text>
</comment>
<comment type="subunit">
    <text evidence="1 8">The two chains are formed from a single-chain precursor by the excision of two Arg residues and are held together by 1 or more disulfide bonds. Forms a heterodimer with SERPINA5 (By similarity). Interacts with ixolaris, an anticoagulant protein from Ixodes scapularis saliva (PubMed:16807644).</text>
</comment>
<comment type="subcellular location">
    <subcellularLocation>
        <location evidence="1">Secreted</location>
    </subcellularLocation>
</comment>
<comment type="tissue specificity">
    <text>Plasma; synthesized in the liver.</text>
</comment>
<comment type="PTM">
    <text>The vitamin K-dependent, enzymatic carboxylation of some glutamate residues allows the modified protein to bind calcium.</text>
</comment>
<comment type="PTM">
    <text evidence="1">N- and O-glycosylated.</text>
</comment>
<comment type="PTM">
    <text evidence="2 3">Proteolytically cleaved and activated by cathepsin CTSG (By similarity). The activation peptide is cleaved by factor IXa (in the intrinsic pathway), or by factor VIIa (in the extrinsic pathway) (By similarity).</text>
</comment>
<comment type="PTM">
    <text evidence="1">The iron and 2-oxoglutarate dependent 3-hydroxylation of aspartate and asparagine is (R) stereospecific within EGF domains.</text>
</comment>
<comment type="similarity">
    <text evidence="6">Belongs to the peptidase S1 family.</text>
</comment>
<proteinExistence type="evidence at protein level"/>
<organism>
    <name type="scientific">Rattus norvegicus</name>
    <name type="common">Rat</name>
    <dbReference type="NCBI Taxonomy" id="10116"/>
    <lineage>
        <taxon>Eukaryota</taxon>
        <taxon>Metazoa</taxon>
        <taxon>Chordata</taxon>
        <taxon>Craniata</taxon>
        <taxon>Vertebrata</taxon>
        <taxon>Euteleostomi</taxon>
        <taxon>Mammalia</taxon>
        <taxon>Eutheria</taxon>
        <taxon>Euarchontoglires</taxon>
        <taxon>Glires</taxon>
        <taxon>Rodentia</taxon>
        <taxon>Myomorpha</taxon>
        <taxon>Muroidea</taxon>
        <taxon>Muridae</taxon>
        <taxon>Murinae</taxon>
        <taxon>Rattus</taxon>
    </lineage>
</organism>
<gene>
    <name type="primary">F10</name>
</gene>
<reference key="1">
    <citation type="journal article" date="1995" name="Thromb. Res.">
        <title>Evidence for competition between vitamin K-dependent clotting factors for intracellular processing by the vitamin K-dependent gamma-carboxylase.</title>
        <authorList>
            <person name="Stanton C."/>
            <person name="Ross R.P."/>
            <person name="Hutson S."/>
            <person name="Wallin R."/>
        </authorList>
    </citation>
    <scope>NUCLEOTIDE SEQUENCE [MRNA]</scope>
    <source>
        <strain>Sprague-Dawley</strain>
    </source>
</reference>
<reference key="2">
    <citation type="journal article" date="2004" name="Genome Res.">
        <title>The status, quality, and expansion of the NIH full-length cDNA project: the Mammalian Gene Collection (MGC).</title>
        <authorList>
            <consortium name="The MGC Project Team"/>
        </authorList>
    </citation>
    <scope>NUCLEOTIDE SEQUENCE [LARGE SCALE MRNA]</scope>
    <source>
        <tissue>Thymus</tissue>
    </source>
</reference>
<reference evidence="9" key="3">
    <citation type="journal article" date="2006" name="Thromb. Haemost.">
        <title>Antithrombotic properties of Ixolaris, a potent inhibitor of the extrinsic pathway of the coagulation cascade.</title>
        <authorList>
            <person name="Nazareth R.A."/>
            <person name="Tomaz L.S."/>
            <person name="Ortiz-Costa S."/>
            <person name="Atella G.C."/>
            <person name="Ribeiro J.M."/>
            <person name="Francischetti I.M."/>
            <person name="Monteiro R.Q."/>
        </authorList>
    </citation>
    <scope>INTERACTION WITH TICK IXOLARIS</scope>
</reference>
<name>FA10_RAT</name>
<protein>
    <recommendedName>
        <fullName>Coagulation factor X</fullName>
        <ecNumber>3.4.21.6</ecNumber>
    </recommendedName>
    <alternativeName>
        <fullName>Stuart factor</fullName>
    </alternativeName>
    <component>
        <recommendedName>
            <fullName>Factor X light chain</fullName>
        </recommendedName>
    </component>
    <component>
        <recommendedName>
            <fullName>Factor X heavy chain</fullName>
        </recommendedName>
    </component>
    <component>
        <recommendedName>
            <fullName>Activated factor Xa heavy chain</fullName>
        </recommendedName>
    </component>
</protein>
<keyword id="KW-0094">Blood coagulation</keyword>
<keyword id="KW-0106">Calcium</keyword>
<keyword id="KW-0165">Cleavage on pair of basic residues</keyword>
<keyword id="KW-1015">Disulfide bond</keyword>
<keyword id="KW-0245">EGF-like domain</keyword>
<keyword id="KW-0301">Gamma-carboxyglutamic acid</keyword>
<keyword id="KW-0325">Glycoprotein</keyword>
<keyword id="KW-0356">Hemostasis</keyword>
<keyword id="KW-0378">Hydrolase</keyword>
<keyword id="KW-0379">Hydroxylation</keyword>
<keyword id="KW-0645">Protease</keyword>
<keyword id="KW-1185">Reference proteome</keyword>
<keyword id="KW-0677">Repeat</keyword>
<keyword id="KW-0964">Secreted</keyword>
<keyword id="KW-0720">Serine protease</keyword>
<keyword id="KW-0732">Signal</keyword>
<keyword id="KW-0865">Zymogen</keyword>
<evidence type="ECO:0000250" key="1"/>
<evidence type="ECO:0000250" key="2">
    <source>
        <dbReference type="UniProtKB" id="P00742"/>
    </source>
</evidence>
<evidence type="ECO:0000250" key="3">
    <source>
        <dbReference type="UniProtKB" id="P00743"/>
    </source>
</evidence>
<evidence type="ECO:0000255" key="4"/>
<evidence type="ECO:0000255" key="5">
    <source>
        <dbReference type="PROSITE-ProRule" id="PRU00076"/>
    </source>
</evidence>
<evidence type="ECO:0000255" key="6">
    <source>
        <dbReference type="PROSITE-ProRule" id="PRU00274"/>
    </source>
</evidence>
<evidence type="ECO:0000255" key="7">
    <source>
        <dbReference type="PROSITE-ProRule" id="PRU00463"/>
    </source>
</evidence>
<evidence type="ECO:0000269" key="8">
    <source>
    </source>
</evidence>
<evidence type="ECO:0000305" key="9"/>
<sequence>MESPVRLSLLYVVLASLLLPGRSVFINRERANNVLQRIRRANSFFEEIKKGNLERECVEEICSFEEAREVFEDNEKTTEFWNKYEDGDQCESSPCQNQGECRDGLGSYTCTCTEGFEGKNCELFVRKLCSLDNGDCDQFCREEQNSVVCSCAKGYFLGNDGKSCLSTAPFPCGKTNKGRAKRSVALNTSNSEPDPEDLMPDADILYPTESPSELLNLNKTEPEANSDDVIRIVGGQECKRGECPWQALLFSDEETDGFCGGTILNEFYILTAAHCLHQAKRFKVRVGDLNTEQEDGGEMVHEVDMIIKHNKFQRDTYDFDIAMLRLKTPITFRENVAPACLPQKDWAEATLMTQKTGIVSGFGRTHEKGRQSKVLKMMEVPYVDRNTCRLSTSFSITQNMFCAGYDAKQEDACQGDSGGPHVTRFKDTYFVTGIVSWGEGCARKGKYGIYTKVTAFLKWIDRSMKARVGPTSETPRLTHPPY</sequence>
<dbReference type="EC" id="3.4.21.6"/>
<dbReference type="EMBL" id="X79807">
    <property type="protein sequence ID" value="CAA56202.1"/>
    <property type="molecule type" value="mRNA"/>
</dbReference>
<dbReference type="EMBL" id="BC088151">
    <property type="protein sequence ID" value="AAH88151.1"/>
    <property type="molecule type" value="mRNA"/>
</dbReference>
<dbReference type="PIR" id="S49075">
    <property type="entry name" value="EXRT"/>
</dbReference>
<dbReference type="RefSeq" id="NP_058839.1">
    <property type="nucleotide sequence ID" value="NM_017143.2"/>
</dbReference>
<dbReference type="SMR" id="Q63207"/>
<dbReference type="FunCoup" id="Q63207">
    <property type="interactions" value="151"/>
</dbReference>
<dbReference type="STRING" id="10116.ENSRNOP00000026677"/>
<dbReference type="BindingDB" id="Q63207"/>
<dbReference type="ChEMBL" id="CHEMBL3755"/>
<dbReference type="MEROPS" id="S01.216"/>
<dbReference type="GlyCosmos" id="Q63207">
    <property type="glycosylation" value="2 sites, No reported glycans"/>
</dbReference>
<dbReference type="GlyGen" id="Q63207">
    <property type="glycosylation" value="3 sites"/>
</dbReference>
<dbReference type="iPTMnet" id="Q63207"/>
<dbReference type="PhosphoSitePlus" id="Q63207"/>
<dbReference type="PaxDb" id="10116-ENSRNOP00000026677"/>
<dbReference type="GeneID" id="29243"/>
<dbReference type="KEGG" id="rno:29243"/>
<dbReference type="UCSC" id="RGD:61850">
    <property type="organism name" value="rat"/>
</dbReference>
<dbReference type="AGR" id="RGD:61850"/>
<dbReference type="CTD" id="2159"/>
<dbReference type="RGD" id="61850">
    <property type="gene designation" value="F10"/>
</dbReference>
<dbReference type="eggNOG" id="ENOG502QS4N">
    <property type="taxonomic scope" value="Eukaryota"/>
</dbReference>
<dbReference type="HOGENOM" id="CLU_006842_19_5_1"/>
<dbReference type="InParanoid" id="Q63207"/>
<dbReference type="OrthoDB" id="6380398at2759"/>
<dbReference type="PhylomeDB" id="Q63207"/>
<dbReference type="TreeFam" id="TF327329"/>
<dbReference type="Reactome" id="R-RNO-140834">
    <property type="pathway name" value="Extrinsic Pathway of Fibrin Clot Formation"/>
</dbReference>
<dbReference type="Reactome" id="R-RNO-140837">
    <property type="pathway name" value="Intrinsic Pathway of Fibrin Clot Formation"/>
</dbReference>
<dbReference type="Reactome" id="R-RNO-140875">
    <property type="pathway name" value="Common Pathway of Fibrin Clot Formation"/>
</dbReference>
<dbReference type="Reactome" id="R-RNO-159740">
    <property type="pathway name" value="Gamma-carboxylation of protein precursors"/>
</dbReference>
<dbReference type="Reactome" id="R-RNO-159763">
    <property type="pathway name" value="Transport of gamma-carboxylated protein precursors from the endoplasmic reticulum to the Golgi apparatus"/>
</dbReference>
<dbReference type="Reactome" id="R-RNO-159782">
    <property type="pathway name" value="Removal of aminoterminal propeptides from gamma-carboxylated proteins"/>
</dbReference>
<dbReference type="PRO" id="PR:Q63207"/>
<dbReference type="Proteomes" id="UP000002494">
    <property type="component" value="Unplaced"/>
</dbReference>
<dbReference type="GO" id="GO:0005615">
    <property type="term" value="C:extracellular space"/>
    <property type="evidence" value="ECO:0000318"/>
    <property type="project" value="GO_Central"/>
</dbReference>
<dbReference type="GO" id="GO:0005509">
    <property type="term" value="F:calcium ion binding"/>
    <property type="evidence" value="ECO:0007669"/>
    <property type="project" value="InterPro"/>
</dbReference>
<dbReference type="GO" id="GO:0005543">
    <property type="term" value="F:phospholipid binding"/>
    <property type="evidence" value="ECO:0000266"/>
    <property type="project" value="RGD"/>
</dbReference>
<dbReference type="GO" id="GO:0004252">
    <property type="term" value="F:serine-type endopeptidase activity"/>
    <property type="evidence" value="ECO:0000266"/>
    <property type="project" value="RGD"/>
</dbReference>
<dbReference type="GO" id="GO:0007596">
    <property type="term" value="P:blood coagulation"/>
    <property type="evidence" value="ECO:0000318"/>
    <property type="project" value="GO_Central"/>
</dbReference>
<dbReference type="GO" id="GO:0032008">
    <property type="term" value="P:positive regulation of TOR signaling"/>
    <property type="evidence" value="ECO:0000266"/>
    <property type="project" value="RGD"/>
</dbReference>
<dbReference type="GO" id="GO:0006508">
    <property type="term" value="P:proteolysis"/>
    <property type="evidence" value="ECO:0007669"/>
    <property type="project" value="UniProtKB-KW"/>
</dbReference>
<dbReference type="CDD" id="cd00054">
    <property type="entry name" value="EGF_CA"/>
    <property type="match status" value="1"/>
</dbReference>
<dbReference type="CDD" id="cd00190">
    <property type="entry name" value="Tryp_SPc"/>
    <property type="match status" value="1"/>
</dbReference>
<dbReference type="FunFam" id="2.10.25.10:FF:000443">
    <property type="entry name" value="Coagulation factor X"/>
    <property type="match status" value="1"/>
</dbReference>
<dbReference type="FunFam" id="2.40.10.10:FF:000013">
    <property type="entry name" value="Coagulation factor X"/>
    <property type="match status" value="1"/>
</dbReference>
<dbReference type="FunFam" id="2.10.25.10:FF:000162">
    <property type="entry name" value="Coagulation factor X (Predicted)"/>
    <property type="match status" value="1"/>
</dbReference>
<dbReference type="FunFam" id="4.10.740.10:FF:000001">
    <property type="entry name" value="vitamin K-dependent protein S"/>
    <property type="match status" value="1"/>
</dbReference>
<dbReference type="Gene3D" id="4.10.740.10">
    <property type="entry name" value="Coagulation Factor IX"/>
    <property type="match status" value="1"/>
</dbReference>
<dbReference type="Gene3D" id="2.10.25.10">
    <property type="entry name" value="Laminin"/>
    <property type="match status" value="2"/>
</dbReference>
<dbReference type="Gene3D" id="2.40.10.10">
    <property type="entry name" value="Trypsin-like serine proteases"/>
    <property type="match status" value="2"/>
</dbReference>
<dbReference type="InterPro" id="IPR017857">
    <property type="entry name" value="Coagulation_fac-like_Gla_dom"/>
</dbReference>
<dbReference type="InterPro" id="IPR001881">
    <property type="entry name" value="EGF-like_Ca-bd_dom"/>
</dbReference>
<dbReference type="InterPro" id="IPR000742">
    <property type="entry name" value="EGF-like_dom"/>
</dbReference>
<dbReference type="InterPro" id="IPR000152">
    <property type="entry name" value="EGF-type_Asp/Asn_hydroxyl_site"/>
</dbReference>
<dbReference type="InterPro" id="IPR018097">
    <property type="entry name" value="EGF_Ca-bd_CS"/>
</dbReference>
<dbReference type="InterPro" id="IPR035972">
    <property type="entry name" value="GLA-like_dom_SF"/>
</dbReference>
<dbReference type="InterPro" id="IPR000294">
    <property type="entry name" value="GLA_domain"/>
</dbReference>
<dbReference type="InterPro" id="IPR012224">
    <property type="entry name" value="Pept_S1A_FX"/>
</dbReference>
<dbReference type="InterPro" id="IPR050442">
    <property type="entry name" value="Peptidase_S1_coag_factors"/>
</dbReference>
<dbReference type="InterPro" id="IPR009003">
    <property type="entry name" value="Peptidase_S1_PA"/>
</dbReference>
<dbReference type="InterPro" id="IPR043504">
    <property type="entry name" value="Peptidase_S1_PA_chymotrypsin"/>
</dbReference>
<dbReference type="InterPro" id="IPR001314">
    <property type="entry name" value="Peptidase_S1A"/>
</dbReference>
<dbReference type="InterPro" id="IPR001254">
    <property type="entry name" value="Trypsin_dom"/>
</dbReference>
<dbReference type="InterPro" id="IPR018114">
    <property type="entry name" value="TRYPSIN_HIS"/>
</dbReference>
<dbReference type="InterPro" id="IPR033116">
    <property type="entry name" value="TRYPSIN_SER"/>
</dbReference>
<dbReference type="PANTHER" id="PTHR24278">
    <property type="entry name" value="COAGULATION FACTOR"/>
    <property type="match status" value="1"/>
</dbReference>
<dbReference type="PANTHER" id="PTHR24278:SF28">
    <property type="entry name" value="COAGULATION FACTOR X"/>
    <property type="match status" value="1"/>
</dbReference>
<dbReference type="Pfam" id="PF00008">
    <property type="entry name" value="EGF"/>
    <property type="match status" value="1"/>
</dbReference>
<dbReference type="Pfam" id="PF14670">
    <property type="entry name" value="FXa_inhibition"/>
    <property type="match status" value="1"/>
</dbReference>
<dbReference type="Pfam" id="PF00594">
    <property type="entry name" value="Gla"/>
    <property type="match status" value="1"/>
</dbReference>
<dbReference type="Pfam" id="PF00089">
    <property type="entry name" value="Trypsin"/>
    <property type="match status" value="1"/>
</dbReference>
<dbReference type="PIRSF" id="PIRSF001143">
    <property type="entry name" value="Factor_X"/>
    <property type="match status" value="1"/>
</dbReference>
<dbReference type="PRINTS" id="PR00722">
    <property type="entry name" value="CHYMOTRYPSIN"/>
</dbReference>
<dbReference type="PRINTS" id="PR00010">
    <property type="entry name" value="EGFBLOOD"/>
</dbReference>
<dbReference type="PRINTS" id="PR00001">
    <property type="entry name" value="GLABLOOD"/>
</dbReference>
<dbReference type="SMART" id="SM00181">
    <property type="entry name" value="EGF"/>
    <property type="match status" value="2"/>
</dbReference>
<dbReference type="SMART" id="SM00179">
    <property type="entry name" value="EGF_CA"/>
    <property type="match status" value="1"/>
</dbReference>
<dbReference type="SMART" id="SM00069">
    <property type="entry name" value="GLA"/>
    <property type="match status" value="1"/>
</dbReference>
<dbReference type="SMART" id="SM00020">
    <property type="entry name" value="Tryp_SPc"/>
    <property type="match status" value="1"/>
</dbReference>
<dbReference type="SUPFAM" id="SSF57630">
    <property type="entry name" value="GLA-domain"/>
    <property type="match status" value="1"/>
</dbReference>
<dbReference type="SUPFAM" id="SSF50494">
    <property type="entry name" value="Trypsin-like serine proteases"/>
    <property type="match status" value="1"/>
</dbReference>
<dbReference type="PROSITE" id="PS00010">
    <property type="entry name" value="ASX_HYDROXYL"/>
    <property type="match status" value="1"/>
</dbReference>
<dbReference type="PROSITE" id="PS00022">
    <property type="entry name" value="EGF_1"/>
    <property type="match status" value="1"/>
</dbReference>
<dbReference type="PROSITE" id="PS01186">
    <property type="entry name" value="EGF_2"/>
    <property type="match status" value="2"/>
</dbReference>
<dbReference type="PROSITE" id="PS50026">
    <property type="entry name" value="EGF_3"/>
    <property type="match status" value="1"/>
</dbReference>
<dbReference type="PROSITE" id="PS01187">
    <property type="entry name" value="EGF_CA"/>
    <property type="match status" value="1"/>
</dbReference>
<dbReference type="PROSITE" id="PS00011">
    <property type="entry name" value="GLA_1"/>
    <property type="match status" value="1"/>
</dbReference>
<dbReference type="PROSITE" id="PS50998">
    <property type="entry name" value="GLA_2"/>
    <property type="match status" value="1"/>
</dbReference>
<dbReference type="PROSITE" id="PS50240">
    <property type="entry name" value="TRYPSIN_DOM"/>
    <property type="match status" value="1"/>
</dbReference>
<dbReference type="PROSITE" id="PS00134">
    <property type="entry name" value="TRYPSIN_HIS"/>
    <property type="match status" value="1"/>
</dbReference>
<dbReference type="PROSITE" id="PS00135">
    <property type="entry name" value="TRYPSIN_SER"/>
    <property type="match status" value="1"/>
</dbReference>
<accession>Q63207</accession>
<feature type="signal peptide" evidence="4">
    <location>
        <begin position="1"/>
        <end position="20"/>
    </location>
</feature>
<feature type="propeptide" id="PRO_0000027804" evidence="1">
    <location>
        <begin position="21"/>
        <end position="40"/>
    </location>
</feature>
<feature type="chain" id="PRO_0000027805" description="Coagulation factor X">
    <location>
        <begin position="41"/>
        <end position="482"/>
    </location>
</feature>
<feature type="chain" id="PRO_0000027806" description="Factor X light chain" evidence="1">
    <location>
        <begin position="41"/>
        <end position="180"/>
    </location>
</feature>
<feature type="chain" id="PRO_0000027807" description="Factor X heavy chain" evidence="1">
    <location>
        <begin position="184"/>
        <end position="482"/>
    </location>
</feature>
<feature type="propeptide" id="PRO_0000027808" description="Activation peptide" evidence="1">
    <location>
        <begin position="184"/>
        <end position="231"/>
    </location>
</feature>
<feature type="chain" id="PRO_0000027809" description="Activated factor Xa heavy chain" evidence="1">
    <location>
        <begin position="232"/>
        <end position="482"/>
    </location>
</feature>
<feature type="domain" description="Gla" evidence="7">
    <location>
        <begin position="41"/>
        <end position="85"/>
    </location>
</feature>
<feature type="domain" description="EGF-like 1; calcium-binding" evidence="5">
    <location>
        <begin position="86"/>
        <end position="122"/>
    </location>
</feature>
<feature type="domain" description="EGF-like 2" evidence="5">
    <location>
        <begin position="125"/>
        <end position="165"/>
    </location>
</feature>
<feature type="domain" description="Peptidase S1" evidence="6">
    <location>
        <begin position="232"/>
        <end position="465"/>
    </location>
</feature>
<feature type="active site" description="Charge relay system" evidence="1">
    <location>
        <position position="274"/>
    </location>
</feature>
<feature type="active site" description="Charge relay system" evidence="1">
    <location>
        <position position="320"/>
    </location>
</feature>
<feature type="active site" description="Charge relay system" evidence="1">
    <location>
        <position position="417"/>
    </location>
</feature>
<feature type="modified residue" description="4-carboxyglutamate" evidence="3 7">
    <location>
        <position position="46"/>
    </location>
</feature>
<feature type="modified residue" description="4-carboxyglutamate" evidence="3 7">
    <location>
        <position position="47"/>
    </location>
</feature>
<feature type="modified residue" description="4-carboxyglutamate" evidence="3 7">
    <location>
        <position position="54"/>
    </location>
</feature>
<feature type="modified residue" description="4-carboxyglutamate" evidence="3 7">
    <location>
        <position position="56"/>
    </location>
</feature>
<feature type="modified residue" description="4-carboxyglutamate" evidence="3 7">
    <location>
        <position position="59"/>
    </location>
</feature>
<feature type="modified residue" description="4-carboxyglutamate" evidence="3 7">
    <location>
        <position position="60"/>
    </location>
</feature>
<feature type="modified residue" description="4-carboxyglutamate" evidence="3 7">
    <location>
        <position position="65"/>
    </location>
</feature>
<feature type="modified residue" description="4-carboxyglutamate" evidence="3 7">
    <location>
        <position position="66"/>
    </location>
</feature>
<feature type="modified residue" description="4-carboxyglutamate" evidence="3 7">
    <location>
        <position position="69"/>
    </location>
</feature>
<feature type="modified residue" description="4-carboxyglutamate" evidence="3 7">
    <location>
        <position position="72"/>
    </location>
</feature>
<feature type="modified residue" description="4-carboxyglutamate" evidence="3 7">
    <location>
        <position position="75"/>
    </location>
</feature>
<feature type="modified residue" description="4-carboxyglutamate" evidence="3 7">
    <location>
        <position position="79"/>
    </location>
</feature>
<feature type="modified residue" description="(3R)-3-hydroxyaspartate" evidence="1">
    <location>
        <position position="103"/>
    </location>
</feature>
<feature type="glycosylation site" description="N-linked (GlcNAc...) asparagine" evidence="4">
    <location>
        <position position="187"/>
    </location>
</feature>
<feature type="glycosylation site" description="N-linked (GlcNAc...) asparagine" evidence="4">
    <location>
        <position position="218"/>
    </location>
</feature>
<feature type="disulfide bond" evidence="1">
    <location>
        <begin position="57"/>
        <end position="62"/>
    </location>
</feature>
<feature type="disulfide bond" evidence="1">
    <location>
        <begin position="90"/>
        <end position="101"/>
    </location>
</feature>
<feature type="disulfide bond" evidence="1">
    <location>
        <begin position="95"/>
        <end position="110"/>
    </location>
</feature>
<feature type="disulfide bond" evidence="1">
    <location>
        <begin position="112"/>
        <end position="121"/>
    </location>
</feature>
<feature type="disulfide bond" evidence="1">
    <location>
        <begin position="129"/>
        <end position="140"/>
    </location>
</feature>
<feature type="disulfide bond" evidence="1">
    <location>
        <begin position="136"/>
        <end position="149"/>
    </location>
</feature>
<feature type="disulfide bond" evidence="1">
    <location>
        <begin position="151"/>
        <end position="164"/>
    </location>
</feature>
<feature type="disulfide bond" description="Interchain (between light and heavy chains)" evidence="5 6 7">
    <location>
        <begin position="172"/>
        <end position="340"/>
    </location>
</feature>
<feature type="disulfide bond" evidence="1">
    <location>
        <begin position="238"/>
        <end position="243"/>
    </location>
</feature>
<feature type="disulfide bond" evidence="1">
    <location>
        <begin position="259"/>
        <end position="275"/>
    </location>
</feature>
<feature type="disulfide bond" evidence="1">
    <location>
        <begin position="388"/>
        <end position="402"/>
    </location>
</feature>
<feature type="disulfide bond" evidence="1">
    <location>
        <begin position="413"/>
        <end position="441"/>
    </location>
</feature>